<feature type="chain" id="PRO_0000135576" description="Nascent polypeptide-associated complex subunit alpha">
    <location>
        <begin position="1"/>
        <end position="215"/>
    </location>
</feature>
<feature type="domain" description="NAC-A/B" evidence="3">
    <location>
        <begin position="70"/>
        <end position="135"/>
    </location>
</feature>
<feature type="domain" description="UBA">
    <location>
        <begin position="176"/>
        <end position="213"/>
    </location>
</feature>
<feature type="region of interest" description="Disordered" evidence="4">
    <location>
        <begin position="1"/>
        <end position="81"/>
    </location>
</feature>
<feature type="region of interest" description="Required for DNA-binding" evidence="1">
    <location>
        <begin position="69"/>
        <end position="80"/>
    </location>
</feature>
<feature type="region of interest" description="RNA/DNA-binding">
    <location>
        <begin position="93"/>
        <end position="108"/>
    </location>
</feature>
<feature type="compositionally biased region" description="Polar residues" evidence="4">
    <location>
        <begin position="9"/>
        <end position="28"/>
    </location>
</feature>
<feature type="compositionally biased region" description="Acidic residues" evidence="4">
    <location>
        <begin position="29"/>
        <end position="42"/>
    </location>
</feature>
<feature type="compositionally biased region" description="Low complexity" evidence="4">
    <location>
        <begin position="44"/>
        <end position="57"/>
    </location>
</feature>
<feature type="modified residue" description="Phosphoserine; by ILK1" evidence="8">
    <location>
        <position position="43"/>
    </location>
</feature>
<feature type="modified residue" description="Phosphoserine" evidence="24">
    <location>
        <position position="132"/>
    </location>
</feature>
<feature type="modified residue" description="N6-acetyllysine; alternate" evidence="20">
    <location>
        <position position="142"/>
    </location>
</feature>
<feature type="modified residue" description="Phosphothreonine; by GSK3-beta" evidence="2">
    <location>
        <position position="159"/>
    </location>
</feature>
<feature type="modified residue" description="Phosphothreonine" evidence="18">
    <location>
        <position position="161"/>
    </location>
</feature>
<feature type="modified residue" description="Phosphoserine" evidence="15 18 19 21 23">
    <location>
        <position position="166"/>
    </location>
</feature>
<feature type="modified residue" description="Phosphoserine" evidence="17 22">
    <location>
        <position position="186"/>
    </location>
</feature>
<feature type="modified residue" description="Phosphoserine" evidence="18 22">
    <location>
        <position position="191"/>
    </location>
</feature>
<feature type="modified residue" description="Phosphoserine" evidence="22">
    <location>
        <position position="203"/>
    </location>
</feature>
<feature type="cross-link" description="Glycyl lysine isopeptide (Lys-Gly) (interchain with G-Cter in SUMO2); alternate" evidence="25">
    <location>
        <position position="142"/>
    </location>
</feature>
<feature type="sequence conflict" description="In Ref. 7; BAD96805." evidence="16" ref="7">
    <original>L</original>
    <variation>S</variation>
    <location>
        <position position="213"/>
    </location>
</feature>
<feature type="helix" evidence="27">
    <location>
        <begin position="80"/>
        <end position="83"/>
    </location>
</feature>
<feature type="strand" evidence="26">
    <location>
        <begin position="86"/>
        <end position="88"/>
    </location>
</feature>
<feature type="strand" evidence="27">
    <location>
        <begin position="91"/>
        <end position="108"/>
    </location>
</feature>
<feature type="strand" evidence="27">
    <location>
        <begin position="110"/>
        <end position="113"/>
    </location>
</feature>
<feature type="strand" evidence="27">
    <location>
        <begin position="117"/>
        <end position="124"/>
    </location>
</feature>
<feature type="strand" evidence="27">
    <location>
        <begin position="126"/>
        <end position="130"/>
    </location>
</feature>
<organism>
    <name type="scientific">Homo sapiens</name>
    <name type="common">Human</name>
    <dbReference type="NCBI Taxonomy" id="9606"/>
    <lineage>
        <taxon>Eukaryota</taxon>
        <taxon>Metazoa</taxon>
        <taxon>Chordata</taxon>
        <taxon>Craniata</taxon>
        <taxon>Vertebrata</taxon>
        <taxon>Euteleostomi</taxon>
        <taxon>Mammalia</taxon>
        <taxon>Eutheria</taxon>
        <taxon>Euarchontoglires</taxon>
        <taxon>Primates</taxon>
        <taxon>Haplorrhini</taxon>
        <taxon>Catarrhini</taxon>
        <taxon>Hominidae</taxon>
        <taxon>Homo</taxon>
    </lineage>
</organism>
<protein>
    <recommendedName>
        <fullName>Nascent polypeptide-associated complex subunit alpha</fullName>
        <shortName>NAC-alpha</shortName>
    </recommendedName>
    <alternativeName>
        <fullName>Alpha-NAC</fullName>
    </alternativeName>
    <allergenName>Hom s 2</allergenName>
</protein>
<comment type="function">
    <text evidence="5 9 14">Prevents inappropriate targeting of non-secretory polypeptides to the endoplasmic reticulum (ER). Binds to nascent polypeptide chains as they emerge from the ribosome and blocks their interaction with the signal recognition particle (SRP), which normally targets nascent secretory peptides to the ER. Also reduces the inherent affinity of ribosomes for protein translocation sites in the ER membrane (M sites). May act as a specific coactivator for JUN, binding to DNA and stabilizing the interaction of JUN homodimers with target gene promoters.</text>
</comment>
<comment type="subunit">
    <text evidence="1 5 6 11 12">Interacts with TBP and JUN (By similarity). Part of the nascent polypeptide-associated complex (NAC), which is a heterodimer of NACA and BTF3 (via NAC-A/B domains). NAC associates with ribosomes through the BTF3/NACB subunit and contacts the ribosomal protein L23, which is positioned near the exiting site. Both subunits can contact nascent polypeptide chains. NACA may also form homodimers, and only this form binds DNA.</text>
</comment>
<comment type="interaction">
    <interactant intactId="EBI-712216">
        <id>Q13765</id>
    </interactant>
    <interactant intactId="EBI-77613">
        <id>P05067</id>
        <label>APP</label>
    </interactant>
    <organismsDiffer>false</organismsDiffer>
    <experiments>3</experiments>
</comment>
<comment type="interaction">
    <interactant intactId="EBI-712216">
        <id>Q13765</id>
    </interactant>
    <interactant intactId="EBI-359793">
        <id>P40222</id>
        <label>TXLNA</label>
    </interactant>
    <organismsDiffer>false</organismsDiffer>
    <experiments>2</experiments>
</comment>
<comment type="interaction">
    <interactant intactId="EBI-712216">
        <id>Q13765</id>
    </interactant>
    <interactant intactId="EBI-25834258">
        <id>P13051-2</id>
        <label>UNG</label>
    </interactant>
    <organismsDiffer>false</organismsDiffer>
    <experiments>3</experiments>
</comment>
<comment type="subcellular location">
    <subcellularLocation>
        <location evidence="5 7 8 11">Cytoplasm</location>
    </subcellularLocation>
    <subcellularLocation>
        <location evidence="7 8 11">Nucleus</location>
    </subcellularLocation>
    <text evidence="5 11">The heterodimer is located mainly in the cytosol, and the homodimer in the nucleus.</text>
</comment>
<comment type="alternative products">
    <event type="alternative splicing"/>
    <isoform>
        <id>Q13765-1</id>
        <name>1</name>
        <sequence type="displayed"/>
    </isoform>
    <isoform>
        <id>E9PAV3-2</id>
        <name>skNAC-2</name>
        <name>2</name>
        <sequence type="external"/>
    </isoform>
    <isoform>
        <id>E9PAV3-1</id>
        <name>skNAC</name>
        <sequence type="external"/>
    </isoform>
</comment>
<comment type="tissue specificity">
    <text evidence="10">Ubiquitously expressed.</text>
</comment>
<comment type="domain">
    <text>The positively charged inner surface of the NAC-A/B domain is crucial for NACA localization in the nucleus and DNA-binding. This region is blocked from binding nucleic acids in the heterodimeric complex by a helix region in the beta-subunit, it also displays much higher affinity for RNA than DNA.</text>
</comment>
<comment type="PTM">
    <text evidence="1 8 15">Phosphorylation of Thr-159 by GSK3B may promote proteasome mediated degradation (By similarity). Phosphorylation of Ser-43 by ILK during cell adhesion may promote nuclear localization.</text>
</comment>
<comment type="allergen">
    <text evidence="13">Causes an allergic reaction in human. Binds to IgE from atopic dermatitis (AD) patients. Identified as an IgE autoantigen in atopic dermatitis (AD) patients with severe skin manifestations.</text>
</comment>
<comment type="similarity">
    <text evidence="16">Belongs to the NAC-alpha family.</text>
</comment>
<comment type="sequence caution" evidence="16">
    <conflict type="erroneous initiation">
        <sequence resource="EMBL-CDS" id="AAV83778"/>
    </conflict>
</comment>
<dbReference type="EMBL" id="AY034001">
    <property type="protein sequence ID" value="AAK57544.1"/>
    <property type="molecule type" value="mRNA"/>
</dbReference>
<dbReference type="EMBL" id="AY911673">
    <property type="protein sequence ID" value="AAX14393.1"/>
    <property type="molecule type" value="mRNA"/>
</dbReference>
<dbReference type="EMBL" id="X80909">
    <property type="protein sequence ID" value="CAA56869.1"/>
    <property type="molecule type" value="mRNA"/>
</dbReference>
<dbReference type="EMBL" id="AF054187">
    <property type="protein sequence ID" value="AAC99403.1"/>
    <property type="molecule type" value="mRNA"/>
</dbReference>
<dbReference type="EMBL" id="AK090650">
    <property type="protein sequence ID" value="BAG52208.1"/>
    <property type="molecule type" value="mRNA"/>
</dbReference>
<dbReference type="EMBL" id="AK311904">
    <property type="protein sequence ID" value="BAG34845.1"/>
    <property type="molecule type" value="mRNA"/>
</dbReference>
<dbReference type="EMBL" id="CR450295">
    <property type="protein sequence ID" value="CAG29291.1"/>
    <property type="molecule type" value="mRNA"/>
</dbReference>
<dbReference type="EMBL" id="AK223085">
    <property type="protein sequence ID" value="BAD96805.1"/>
    <property type="molecule type" value="mRNA"/>
</dbReference>
<dbReference type="EMBL" id="AC117378">
    <property type="status" value="NOT_ANNOTATED_CDS"/>
    <property type="molecule type" value="Genomic_DNA"/>
</dbReference>
<dbReference type="EMBL" id="CH471054">
    <property type="protein sequence ID" value="EAW96960.1"/>
    <property type="molecule type" value="Genomic_DNA"/>
</dbReference>
<dbReference type="EMBL" id="BC105120">
    <property type="protein sequence ID" value="AAI05121.1"/>
    <property type="molecule type" value="mRNA"/>
</dbReference>
<dbReference type="EMBL" id="BC105122">
    <property type="protein sequence ID" value="AAI05123.1"/>
    <property type="molecule type" value="mRNA"/>
</dbReference>
<dbReference type="EMBL" id="BC106041">
    <property type="protein sequence ID" value="AAI06042.1"/>
    <property type="molecule type" value="mRNA"/>
</dbReference>
<dbReference type="EMBL" id="AY605660">
    <property type="protein sequence ID" value="AAV83778.1"/>
    <property type="status" value="ALT_INIT"/>
    <property type="molecule type" value="mRNA"/>
</dbReference>
<dbReference type="CCDS" id="CCDS31837.1">
    <molecule id="Q13765-1"/>
</dbReference>
<dbReference type="PIR" id="S49326">
    <property type="entry name" value="S49326"/>
</dbReference>
<dbReference type="RefSeq" id="NP_001106672.1">
    <molecule id="Q13765-1"/>
    <property type="nucleotide sequence ID" value="NM_001113201.3"/>
</dbReference>
<dbReference type="RefSeq" id="NP_001106673.1">
    <molecule id="Q13765-1"/>
    <property type="nucleotide sequence ID" value="NM_001113202.2"/>
</dbReference>
<dbReference type="RefSeq" id="NP_001106674.2">
    <property type="nucleotide sequence ID" value="NM_001113203.2"/>
</dbReference>
<dbReference type="RefSeq" id="NP_001307122.1">
    <molecule id="Q13765-1"/>
    <property type="nucleotide sequence ID" value="NM_001320193.2"/>
</dbReference>
<dbReference type="RefSeq" id="NP_001307123.1">
    <property type="nucleotide sequence ID" value="NM_001320194.1"/>
</dbReference>
<dbReference type="RefSeq" id="NP_005585.1">
    <molecule id="Q13765-1"/>
    <property type="nucleotide sequence ID" value="NM_005594.6"/>
</dbReference>
<dbReference type="PDB" id="3LKX">
    <property type="method" value="X-ray"/>
    <property type="resolution" value="2.50 A"/>
    <property type="chains" value="B=84-136"/>
</dbReference>
<dbReference type="PDB" id="3MCB">
    <property type="method" value="X-ray"/>
    <property type="resolution" value="1.90 A"/>
    <property type="chains" value="A=79-132"/>
</dbReference>
<dbReference type="PDB" id="3MCE">
    <property type="method" value="X-ray"/>
    <property type="resolution" value="2.40 A"/>
    <property type="chains" value="A/B/C/D=81-133"/>
</dbReference>
<dbReference type="PDB" id="7QWQ">
    <property type="method" value="EM"/>
    <property type="resolution" value="2.83 A"/>
    <property type="chains" value="t=1-215"/>
</dbReference>
<dbReference type="PDB" id="7QWR">
    <property type="method" value="EM"/>
    <property type="resolution" value="2.90 A"/>
    <property type="chains" value="t=1-215"/>
</dbReference>
<dbReference type="PDB" id="7QWS">
    <property type="method" value="EM"/>
    <property type="resolution" value="3.40 A"/>
    <property type="chains" value="t=1-215"/>
</dbReference>
<dbReference type="PDB" id="8P2K">
    <property type="method" value="EM"/>
    <property type="resolution" value="2.90 A"/>
    <property type="chains" value="Na=1-215"/>
</dbReference>
<dbReference type="PDB" id="9F1B">
    <property type="method" value="EM"/>
    <property type="resolution" value="3.01 A"/>
    <property type="chains" value="Ct=1-215"/>
</dbReference>
<dbReference type="PDB" id="9F1C">
    <property type="method" value="EM"/>
    <property type="resolution" value="3.78 A"/>
    <property type="chains" value="Ct=1-215"/>
</dbReference>
<dbReference type="PDB" id="9F1D">
    <property type="method" value="EM"/>
    <property type="resolution" value="3.26 A"/>
    <property type="chains" value="Ct=1-215"/>
</dbReference>
<dbReference type="PDB" id="9FQ0">
    <property type="method" value="EM"/>
    <property type="resolution" value="4.67 A"/>
    <property type="chains" value="A=1-215"/>
</dbReference>
<dbReference type="PDBsum" id="3LKX"/>
<dbReference type="PDBsum" id="3MCB"/>
<dbReference type="PDBsum" id="3MCE"/>
<dbReference type="PDBsum" id="7QWQ"/>
<dbReference type="PDBsum" id="7QWR"/>
<dbReference type="PDBsum" id="7QWS"/>
<dbReference type="PDBsum" id="8P2K"/>
<dbReference type="PDBsum" id="9F1B"/>
<dbReference type="PDBsum" id="9F1C"/>
<dbReference type="PDBsum" id="9F1D"/>
<dbReference type="PDBsum" id="9FQ0"/>
<dbReference type="EMDB" id="EMD-14191"/>
<dbReference type="EMDB" id="EMD-14192"/>
<dbReference type="EMDB" id="EMD-14193"/>
<dbReference type="EMDB" id="EMD-17367"/>
<dbReference type="EMDB" id="EMD-50124"/>
<dbReference type="EMDB" id="EMD-50125"/>
<dbReference type="EMDB" id="EMD-50126"/>
<dbReference type="EMDB" id="EMD-50642"/>
<dbReference type="SMR" id="Q13765"/>
<dbReference type="BioGRID" id="110748">
    <property type="interactions" value="239"/>
</dbReference>
<dbReference type="ComplexPortal" id="CPX-676">
    <property type="entry name" value="Nascent polypeptide-associated complex"/>
</dbReference>
<dbReference type="CORUM" id="Q13765"/>
<dbReference type="DIP" id="DIP-43878N"/>
<dbReference type="IntAct" id="Q13765">
    <property type="interactions" value="57"/>
</dbReference>
<dbReference type="MINT" id="Q13765"/>
<dbReference type="Allergome" id="3323">
    <property type="allergen name" value="Hom s 2.0101"/>
</dbReference>
<dbReference type="Allergome" id="412">
    <property type="allergen name" value="Hom s 2"/>
</dbReference>
<dbReference type="iPTMnet" id="Q13765"/>
<dbReference type="MetOSite" id="Q13765"/>
<dbReference type="SwissPalm" id="Q13765"/>
<dbReference type="BioMuta" id="NACA"/>
<dbReference type="DMDM" id="71151996"/>
<dbReference type="jPOST" id="Q13765"/>
<dbReference type="MassIVE" id="Q13765"/>
<dbReference type="PeptideAtlas" id="Q13765"/>
<dbReference type="ProteomicsDB" id="28706"/>
<dbReference type="ProteomicsDB" id="59679">
    <molecule id="Q13765-1"/>
</dbReference>
<dbReference type="Pumba" id="Q13765"/>
<dbReference type="TopDownProteomics" id="Q13765-1">
    <molecule id="Q13765-1"/>
</dbReference>
<dbReference type="Antibodypedia" id="28384">
    <property type="antibodies" value="96 antibodies from 17 providers"/>
</dbReference>
<dbReference type="DNASU" id="4666"/>
<dbReference type="Ensembl" id="ENST00000356769.7">
    <molecule id="Q13765-1"/>
    <property type="protein sequence ID" value="ENSP00000349212.3"/>
    <property type="gene ID" value="ENSG00000196531.14"/>
</dbReference>
<dbReference type="Ensembl" id="ENST00000393891.8">
    <molecule id="Q13765-1"/>
    <property type="protein sequence ID" value="ENSP00000377469.4"/>
    <property type="gene ID" value="ENSG00000196531.14"/>
</dbReference>
<dbReference type="Ensembl" id="ENST00000546392.6">
    <molecule id="Q13765-1"/>
    <property type="protein sequence ID" value="ENSP00000446801.1"/>
    <property type="gene ID" value="ENSG00000196531.14"/>
</dbReference>
<dbReference type="Ensembl" id="ENST00000552540.5">
    <molecule id="Q13765-1"/>
    <property type="protein sequence ID" value="ENSP00000447821.1"/>
    <property type="gene ID" value="ENSG00000196531.14"/>
</dbReference>
<dbReference type="Ensembl" id="ENST00000678066.1">
    <molecule id="Q13765-1"/>
    <property type="protein sequence ID" value="ENSP00000503345.1"/>
    <property type="gene ID" value="ENSG00000196531.14"/>
</dbReference>
<dbReference type="GeneID" id="4666"/>
<dbReference type="KEGG" id="hsa:4666"/>
<dbReference type="UCSC" id="uc001sly.3">
    <molecule id="Q13765-1"/>
    <property type="organism name" value="human"/>
</dbReference>
<dbReference type="AGR" id="HGNC:7629"/>
<dbReference type="CTD" id="4666"/>
<dbReference type="DisGeNET" id="4666"/>
<dbReference type="GeneCards" id="NACA"/>
<dbReference type="HGNC" id="HGNC:7629">
    <property type="gene designation" value="NACA"/>
</dbReference>
<dbReference type="HPA" id="ENSG00000196531">
    <property type="expression patterns" value="Low tissue specificity"/>
</dbReference>
<dbReference type="MIM" id="601234">
    <property type="type" value="gene"/>
</dbReference>
<dbReference type="neXtProt" id="NX_Q13765"/>
<dbReference type="OpenTargets" id="ENSG00000196531"/>
<dbReference type="PharmGKB" id="PA31433"/>
<dbReference type="VEuPathDB" id="HostDB:ENSG00000196531"/>
<dbReference type="GeneTree" id="ENSGT00440000033468"/>
<dbReference type="HOGENOM" id="CLU_057806_1_2_1"/>
<dbReference type="OrthoDB" id="3169036at2759"/>
<dbReference type="PhylomeDB" id="Q13765"/>
<dbReference type="TreeFam" id="TF313348"/>
<dbReference type="PathwayCommons" id="Q13765"/>
<dbReference type="SignaLink" id="Q13765"/>
<dbReference type="SIGNOR" id="Q13765"/>
<dbReference type="BioGRID-ORCS" id="4666">
    <property type="hits" value="543 hits in 1157 CRISPR screens"/>
</dbReference>
<dbReference type="ChiTaRS" id="NACA">
    <property type="organism name" value="human"/>
</dbReference>
<dbReference type="EvolutionaryTrace" id="Q13765"/>
<dbReference type="GeneWiki" id="NACA_(gene)"/>
<dbReference type="GenomeRNAi" id="4666"/>
<dbReference type="Pharos" id="Q13765">
    <property type="development level" value="Tbio"/>
</dbReference>
<dbReference type="Proteomes" id="UP000005640">
    <property type="component" value="Chromosome 12"/>
</dbReference>
<dbReference type="Bgee" id="ENSG00000196531">
    <property type="expression patterns" value="Expressed in tendon of biceps brachii and 211 other cell types or tissues"/>
</dbReference>
<dbReference type="ExpressionAtlas" id="Q13765">
    <property type="expression patterns" value="baseline and differential"/>
</dbReference>
<dbReference type="GO" id="GO:0005737">
    <property type="term" value="C:cytoplasm"/>
    <property type="evidence" value="ECO:0000314"/>
    <property type="project" value="ComplexPortal"/>
</dbReference>
<dbReference type="GO" id="GO:0070062">
    <property type="term" value="C:extracellular exosome"/>
    <property type="evidence" value="ECO:0007005"/>
    <property type="project" value="UniProtKB"/>
</dbReference>
<dbReference type="GO" id="GO:0005854">
    <property type="term" value="C:nascent polypeptide-associated complex"/>
    <property type="evidence" value="ECO:0000353"/>
    <property type="project" value="ComplexPortal"/>
</dbReference>
<dbReference type="GO" id="GO:0005634">
    <property type="term" value="C:nucleus"/>
    <property type="evidence" value="ECO:0000303"/>
    <property type="project" value="BHF-UCL"/>
</dbReference>
<dbReference type="GO" id="GO:0003677">
    <property type="term" value="F:DNA binding"/>
    <property type="evidence" value="ECO:0007669"/>
    <property type="project" value="UniProtKB-KW"/>
</dbReference>
<dbReference type="GO" id="GO:0003713">
    <property type="term" value="F:transcription coactivator activity"/>
    <property type="evidence" value="ECO:0000303"/>
    <property type="project" value="BHF-UCL"/>
</dbReference>
<dbReference type="GO" id="GO:0003231">
    <property type="term" value="P:cardiac ventricle development"/>
    <property type="evidence" value="ECO:0000250"/>
    <property type="project" value="BHF-UCL"/>
</dbReference>
<dbReference type="GO" id="GO:0061384">
    <property type="term" value="P:heart trabecula morphogenesis"/>
    <property type="evidence" value="ECO:0000250"/>
    <property type="project" value="BHF-UCL"/>
</dbReference>
<dbReference type="GO" id="GO:1905551">
    <property type="term" value="P:negative regulation of protein localization to endoplasmic reticulum"/>
    <property type="evidence" value="ECO:0000314"/>
    <property type="project" value="ComplexPortal"/>
</dbReference>
<dbReference type="GO" id="GO:0010664">
    <property type="term" value="P:negative regulation of striated muscle cell apoptotic process"/>
    <property type="evidence" value="ECO:0000250"/>
    <property type="project" value="BHF-UCL"/>
</dbReference>
<dbReference type="GO" id="GO:0000122">
    <property type="term" value="P:negative regulation of transcription by RNA polymerase II"/>
    <property type="evidence" value="ECO:0000250"/>
    <property type="project" value="BHF-UCL"/>
</dbReference>
<dbReference type="GO" id="GO:2000138">
    <property type="term" value="P:positive regulation of cell proliferation involved in heart morphogenesis"/>
    <property type="evidence" value="ECO:0000250"/>
    <property type="project" value="BHF-UCL"/>
</dbReference>
<dbReference type="GO" id="GO:0048633">
    <property type="term" value="P:positive regulation of skeletal muscle tissue growth"/>
    <property type="evidence" value="ECO:0000250"/>
    <property type="project" value="BHF-UCL"/>
</dbReference>
<dbReference type="GO" id="GO:0045944">
    <property type="term" value="P:positive regulation of transcription by RNA polymerase II"/>
    <property type="evidence" value="ECO:0000250"/>
    <property type="project" value="BHF-UCL"/>
</dbReference>
<dbReference type="GO" id="GO:0015031">
    <property type="term" value="P:protein transport"/>
    <property type="evidence" value="ECO:0007669"/>
    <property type="project" value="UniProtKB-KW"/>
</dbReference>
<dbReference type="GO" id="GO:0048742">
    <property type="term" value="P:regulation of skeletal muscle fiber development"/>
    <property type="evidence" value="ECO:0000250"/>
    <property type="project" value="BHF-UCL"/>
</dbReference>
<dbReference type="GO" id="GO:0043403">
    <property type="term" value="P:skeletal muscle tissue regeneration"/>
    <property type="evidence" value="ECO:0000250"/>
    <property type="project" value="BHF-UCL"/>
</dbReference>
<dbReference type="GO" id="GO:0006412">
    <property type="term" value="P:translation"/>
    <property type="evidence" value="ECO:0000304"/>
    <property type="project" value="ProtInc"/>
</dbReference>
<dbReference type="GO" id="GO:0042060">
    <property type="term" value="P:wound healing"/>
    <property type="evidence" value="ECO:0000250"/>
    <property type="project" value="BHF-UCL"/>
</dbReference>
<dbReference type="CDD" id="cd22054">
    <property type="entry name" value="NAC_NACA"/>
    <property type="match status" value="1"/>
</dbReference>
<dbReference type="CDD" id="cd14415">
    <property type="entry name" value="UBA_NACA_NACP1"/>
    <property type="match status" value="1"/>
</dbReference>
<dbReference type="FunFam" id="2.20.70.30:FF:000002">
    <property type="entry name" value="Nascent polypeptide-associated complex (NAC), alpha subunit"/>
    <property type="match status" value="1"/>
</dbReference>
<dbReference type="FunFam" id="1.10.8.10:FF:000006">
    <property type="entry name" value="Putative nascent polypeptide-associated complex subunit alpha"/>
    <property type="match status" value="1"/>
</dbReference>
<dbReference type="Gene3D" id="1.10.8.10">
    <property type="entry name" value="DNA helicase RuvA subunit, C-terminal domain"/>
    <property type="match status" value="1"/>
</dbReference>
<dbReference type="Gene3D" id="2.20.70.30">
    <property type="entry name" value="Nascent polypeptide-associated complex domain"/>
    <property type="match status" value="1"/>
</dbReference>
<dbReference type="IDEAL" id="IID00472"/>
<dbReference type="InterPro" id="IPR016641">
    <property type="entry name" value="EGD2/NACA0like"/>
</dbReference>
<dbReference type="InterPro" id="IPR044034">
    <property type="entry name" value="NAC-like_UBA"/>
</dbReference>
<dbReference type="InterPro" id="IPR038187">
    <property type="entry name" value="NAC_A/B_dom_sf"/>
</dbReference>
<dbReference type="InterPro" id="IPR002715">
    <property type="entry name" value="Nas_poly-pep-assoc_cplx_dom"/>
</dbReference>
<dbReference type="PANTHER" id="PTHR21713">
    <property type="entry name" value="NASCENT POLYPEPTIDE ASSOCIATED COMPLEX ALPHA SUBUNIT-RELATED"/>
    <property type="match status" value="1"/>
</dbReference>
<dbReference type="Pfam" id="PF01849">
    <property type="entry name" value="NAC"/>
    <property type="match status" value="1"/>
</dbReference>
<dbReference type="Pfam" id="PF19026">
    <property type="entry name" value="UBA_HYPK"/>
    <property type="match status" value="1"/>
</dbReference>
<dbReference type="PIRSF" id="PIRSF015901">
    <property type="entry name" value="NAC_alpha"/>
    <property type="match status" value="1"/>
</dbReference>
<dbReference type="SMART" id="SM01407">
    <property type="entry name" value="NAC"/>
    <property type="match status" value="1"/>
</dbReference>
<dbReference type="PROSITE" id="PS51151">
    <property type="entry name" value="NAC_AB"/>
    <property type="match status" value="1"/>
</dbReference>
<reference key="1">
    <citation type="journal article" date="2002" name="Int. J. Cancer">
        <title>Novel products of the HuD, HuC, NNP-1 and alpha-internexin genes identified by autologous antibody screening of a pediatric neuroblastoma library.</title>
        <authorList>
            <person name="Behrends U."/>
            <person name="Jandl T."/>
            <person name="Golbeck A."/>
            <person name="Lechner B."/>
            <person name="Mueller-Weihrich S."/>
            <person name="Schmid I."/>
            <person name="Till H."/>
            <person name="Berthold F."/>
            <person name="Voltz R."/>
            <person name="Mautner J.M."/>
        </authorList>
    </citation>
    <scope>NUCLEOTIDE SEQUENCE [MRNA] (ISOFORM 1)</scope>
    <source>
        <tissue>Neuroblastoma</tissue>
    </source>
</reference>
<reference key="2">
    <citation type="journal article" date="2004" name="Immunology">
        <title>Investigation of alpha nascent polypeptide-associated complex functions in a human CD8(+) T cell ex vivo expansion model using antisense oligonucleotides.</title>
        <authorList>
            <person name="Al-Shanti N."/>
            <person name="Steward C.G."/>
            <person name="Garland R.J."/>
            <person name="Rowbottom A.W."/>
        </authorList>
    </citation>
    <scope>NUCLEOTIDE SEQUENCE [MRNA] (ISOFORM 1)</scope>
</reference>
<reference key="3">
    <citation type="submission" date="1994-08" db="EMBL/GenBank/DDBJ databases">
        <title>Nascent polypeptide-associate complex (NAC): a novel type of polypeptide binding protein.</title>
        <authorList>
            <person name="Sakai H."/>
            <person name="Chew C."/>
            <person name="Wang S."/>
            <person name="Wiedmann B."/>
            <person name="Geromanos S."/>
            <person name="Tempst P."/>
            <person name="Wiedmann M."/>
        </authorList>
    </citation>
    <scope>NUCLEOTIDE SEQUENCE [MRNA] (ISOFORM 1)</scope>
    <source>
        <tissue>Brain</tissue>
    </source>
</reference>
<reference key="4">
    <citation type="journal article" date="2000" name="Genome Res.">
        <title>Cloning and functional analysis of cDNAs with open reading frames for 300 previously undefined genes expressed in CD34+ hematopoietic stem/progenitor cells.</title>
        <authorList>
            <person name="Zhang Q.-H."/>
            <person name="Ye M."/>
            <person name="Wu X.-Y."/>
            <person name="Ren S.-X."/>
            <person name="Zhao M."/>
            <person name="Zhao C.-J."/>
            <person name="Fu G."/>
            <person name="Shen Y."/>
            <person name="Fan H.-Y."/>
            <person name="Lu G."/>
            <person name="Zhong M."/>
            <person name="Xu X.-R."/>
            <person name="Han Z.-G."/>
            <person name="Zhang J.-W."/>
            <person name="Tao J."/>
            <person name="Huang Q.-H."/>
            <person name="Zhou J."/>
            <person name="Hu G.-X."/>
            <person name="Gu J."/>
            <person name="Chen S.-J."/>
            <person name="Chen Z."/>
        </authorList>
    </citation>
    <scope>NUCLEOTIDE SEQUENCE [LARGE SCALE MRNA] (ISOFORM 1)</scope>
    <source>
        <tissue>Umbilical cord blood</tissue>
    </source>
</reference>
<reference key="5">
    <citation type="journal article" date="2004" name="Nat. Genet.">
        <title>Complete sequencing and characterization of 21,243 full-length human cDNAs.</title>
        <authorList>
            <person name="Ota T."/>
            <person name="Suzuki Y."/>
            <person name="Nishikawa T."/>
            <person name="Otsuki T."/>
            <person name="Sugiyama T."/>
            <person name="Irie R."/>
            <person name="Wakamatsu A."/>
            <person name="Hayashi K."/>
            <person name="Sato H."/>
            <person name="Nagai K."/>
            <person name="Kimura K."/>
            <person name="Makita H."/>
            <person name="Sekine M."/>
            <person name="Obayashi M."/>
            <person name="Nishi T."/>
            <person name="Shibahara T."/>
            <person name="Tanaka T."/>
            <person name="Ishii S."/>
            <person name="Yamamoto J."/>
            <person name="Saito K."/>
            <person name="Kawai Y."/>
            <person name="Isono Y."/>
            <person name="Nakamura Y."/>
            <person name="Nagahari K."/>
            <person name="Murakami K."/>
            <person name="Yasuda T."/>
            <person name="Iwayanagi T."/>
            <person name="Wagatsuma M."/>
            <person name="Shiratori A."/>
            <person name="Sudo H."/>
            <person name="Hosoiri T."/>
            <person name="Kaku Y."/>
            <person name="Kodaira H."/>
            <person name="Kondo H."/>
            <person name="Sugawara M."/>
            <person name="Takahashi M."/>
            <person name="Kanda K."/>
            <person name="Yokoi T."/>
            <person name="Furuya T."/>
            <person name="Kikkawa E."/>
            <person name="Omura Y."/>
            <person name="Abe K."/>
            <person name="Kamihara K."/>
            <person name="Katsuta N."/>
            <person name="Sato K."/>
            <person name="Tanikawa M."/>
            <person name="Yamazaki M."/>
            <person name="Ninomiya K."/>
            <person name="Ishibashi T."/>
            <person name="Yamashita H."/>
            <person name="Murakawa K."/>
            <person name="Fujimori K."/>
            <person name="Tanai H."/>
            <person name="Kimata M."/>
            <person name="Watanabe M."/>
            <person name="Hiraoka S."/>
            <person name="Chiba Y."/>
            <person name="Ishida S."/>
            <person name="Ono Y."/>
            <person name="Takiguchi S."/>
            <person name="Watanabe S."/>
            <person name="Yosida M."/>
            <person name="Hotuta T."/>
            <person name="Kusano J."/>
            <person name="Kanehori K."/>
            <person name="Takahashi-Fujii A."/>
            <person name="Hara H."/>
            <person name="Tanase T.-O."/>
            <person name="Nomura Y."/>
            <person name="Togiya S."/>
            <person name="Komai F."/>
            <person name="Hara R."/>
            <person name="Takeuchi K."/>
            <person name="Arita M."/>
            <person name="Imose N."/>
            <person name="Musashino K."/>
            <person name="Yuuki H."/>
            <person name="Oshima A."/>
            <person name="Sasaki N."/>
            <person name="Aotsuka S."/>
            <person name="Yoshikawa Y."/>
            <person name="Matsunawa H."/>
            <person name="Ichihara T."/>
            <person name="Shiohata N."/>
            <person name="Sano S."/>
            <person name="Moriya S."/>
            <person name="Momiyama H."/>
            <person name="Satoh N."/>
            <person name="Takami S."/>
            <person name="Terashima Y."/>
            <person name="Suzuki O."/>
            <person name="Nakagawa S."/>
            <person name="Senoh A."/>
            <person name="Mizoguchi H."/>
            <person name="Goto Y."/>
            <person name="Shimizu F."/>
            <person name="Wakebe H."/>
            <person name="Hishigaki H."/>
            <person name="Watanabe T."/>
            <person name="Sugiyama A."/>
            <person name="Takemoto M."/>
            <person name="Kawakami B."/>
            <person name="Yamazaki M."/>
            <person name="Watanabe K."/>
            <person name="Kumagai A."/>
            <person name="Itakura S."/>
            <person name="Fukuzumi Y."/>
            <person name="Fujimori Y."/>
            <person name="Komiyama M."/>
            <person name="Tashiro H."/>
            <person name="Tanigami A."/>
            <person name="Fujiwara T."/>
            <person name="Ono T."/>
            <person name="Yamada K."/>
            <person name="Fujii Y."/>
            <person name="Ozaki K."/>
            <person name="Hirao M."/>
            <person name="Ohmori Y."/>
            <person name="Kawabata A."/>
            <person name="Hikiji T."/>
            <person name="Kobatake N."/>
            <person name="Inagaki H."/>
            <person name="Ikema Y."/>
            <person name="Okamoto S."/>
            <person name="Okitani R."/>
            <person name="Kawakami T."/>
            <person name="Noguchi S."/>
            <person name="Itoh T."/>
            <person name="Shigeta K."/>
            <person name="Senba T."/>
            <person name="Matsumura K."/>
            <person name="Nakajima Y."/>
            <person name="Mizuno T."/>
            <person name="Morinaga M."/>
            <person name="Sasaki M."/>
            <person name="Togashi T."/>
            <person name="Oyama M."/>
            <person name="Hata H."/>
            <person name="Watanabe M."/>
            <person name="Komatsu T."/>
            <person name="Mizushima-Sugano J."/>
            <person name="Satoh T."/>
            <person name="Shirai Y."/>
            <person name="Takahashi Y."/>
            <person name="Nakagawa K."/>
            <person name="Okumura K."/>
            <person name="Nagase T."/>
            <person name="Nomura N."/>
            <person name="Kikuchi H."/>
            <person name="Masuho Y."/>
            <person name="Yamashita R."/>
            <person name="Nakai K."/>
            <person name="Yada T."/>
            <person name="Nakamura Y."/>
            <person name="Ohara O."/>
            <person name="Isogai T."/>
            <person name="Sugano S."/>
        </authorList>
    </citation>
    <scope>NUCLEOTIDE SEQUENCE [LARGE SCALE MRNA] (ISOFORM 1)</scope>
    <source>
        <tissue>Cerebellum</tissue>
        <tissue>Synovium</tissue>
    </source>
</reference>
<reference key="6">
    <citation type="submission" date="2004-05" db="EMBL/GenBank/DDBJ databases">
        <title>Cloning of human full open reading frames in Gateway(TM) system entry vector (pDONR201).</title>
        <authorList>
            <person name="Ebert L."/>
            <person name="Schick M."/>
            <person name="Neubert P."/>
            <person name="Schatten R."/>
            <person name="Henze S."/>
            <person name="Korn B."/>
        </authorList>
    </citation>
    <scope>NUCLEOTIDE SEQUENCE [LARGE SCALE MRNA] (ISOFORM 1)</scope>
</reference>
<reference key="7">
    <citation type="submission" date="2005-04" db="EMBL/GenBank/DDBJ databases">
        <authorList>
            <person name="Suzuki Y."/>
            <person name="Sugano S."/>
            <person name="Totoki Y."/>
            <person name="Toyoda A."/>
            <person name="Takeda T."/>
            <person name="Sakaki Y."/>
            <person name="Tanaka A."/>
            <person name="Yokoyama S."/>
        </authorList>
    </citation>
    <scope>NUCLEOTIDE SEQUENCE [LARGE SCALE MRNA] (ISOFORM 1)</scope>
</reference>
<reference key="8">
    <citation type="journal article" date="2006" name="Nature">
        <title>The finished DNA sequence of human chromosome 12.</title>
        <authorList>
            <person name="Scherer S.E."/>
            <person name="Muzny D.M."/>
            <person name="Buhay C.J."/>
            <person name="Chen R."/>
            <person name="Cree A."/>
            <person name="Ding Y."/>
            <person name="Dugan-Rocha S."/>
            <person name="Gill R."/>
            <person name="Gunaratne P."/>
            <person name="Harris R.A."/>
            <person name="Hawes A.C."/>
            <person name="Hernandez J."/>
            <person name="Hodgson A.V."/>
            <person name="Hume J."/>
            <person name="Jackson A."/>
            <person name="Khan Z.M."/>
            <person name="Kovar-Smith C."/>
            <person name="Lewis L.R."/>
            <person name="Lozado R.J."/>
            <person name="Metzker M.L."/>
            <person name="Milosavljevic A."/>
            <person name="Miner G.R."/>
            <person name="Montgomery K.T."/>
            <person name="Morgan M.B."/>
            <person name="Nazareth L.V."/>
            <person name="Scott G."/>
            <person name="Sodergren E."/>
            <person name="Song X.-Z."/>
            <person name="Steffen D."/>
            <person name="Lovering R.C."/>
            <person name="Wheeler D.A."/>
            <person name="Worley K.C."/>
            <person name="Yuan Y."/>
            <person name="Zhang Z."/>
            <person name="Adams C.Q."/>
            <person name="Ansari-Lari M.A."/>
            <person name="Ayele M."/>
            <person name="Brown M.J."/>
            <person name="Chen G."/>
            <person name="Chen Z."/>
            <person name="Clerc-Blankenburg K.P."/>
            <person name="Davis C."/>
            <person name="Delgado O."/>
            <person name="Dinh H.H."/>
            <person name="Draper H."/>
            <person name="Gonzalez-Garay M.L."/>
            <person name="Havlak P."/>
            <person name="Jackson L.R."/>
            <person name="Jacob L.S."/>
            <person name="Kelly S.H."/>
            <person name="Li L."/>
            <person name="Li Z."/>
            <person name="Liu J."/>
            <person name="Liu W."/>
            <person name="Lu J."/>
            <person name="Maheshwari M."/>
            <person name="Nguyen B.-V."/>
            <person name="Okwuonu G.O."/>
            <person name="Pasternak S."/>
            <person name="Perez L.M."/>
            <person name="Plopper F.J.H."/>
            <person name="Santibanez J."/>
            <person name="Shen H."/>
            <person name="Tabor P.E."/>
            <person name="Verduzco D."/>
            <person name="Waldron L."/>
            <person name="Wang Q."/>
            <person name="Williams G.A."/>
            <person name="Zhang J."/>
            <person name="Zhou J."/>
            <person name="Allen C.C."/>
            <person name="Amin A.G."/>
            <person name="Anyalebechi V."/>
            <person name="Bailey M."/>
            <person name="Barbaria J.A."/>
            <person name="Bimage K.E."/>
            <person name="Bryant N.P."/>
            <person name="Burch P.E."/>
            <person name="Burkett C.E."/>
            <person name="Burrell K.L."/>
            <person name="Calderon E."/>
            <person name="Cardenas V."/>
            <person name="Carter K."/>
            <person name="Casias K."/>
            <person name="Cavazos I."/>
            <person name="Cavazos S.R."/>
            <person name="Ceasar H."/>
            <person name="Chacko J."/>
            <person name="Chan S.N."/>
            <person name="Chavez D."/>
            <person name="Christopoulos C."/>
            <person name="Chu J."/>
            <person name="Cockrell R."/>
            <person name="Cox C.D."/>
            <person name="Dang M."/>
            <person name="Dathorne S.R."/>
            <person name="David R."/>
            <person name="Davis C.M."/>
            <person name="Davy-Carroll L."/>
            <person name="Deshazo D.R."/>
            <person name="Donlin J.E."/>
            <person name="D'Souza L."/>
            <person name="Eaves K.A."/>
            <person name="Egan A."/>
            <person name="Emery-Cohen A.J."/>
            <person name="Escotto M."/>
            <person name="Flagg N."/>
            <person name="Forbes L.D."/>
            <person name="Gabisi A.M."/>
            <person name="Garza M."/>
            <person name="Hamilton C."/>
            <person name="Henderson N."/>
            <person name="Hernandez O."/>
            <person name="Hines S."/>
            <person name="Hogues M.E."/>
            <person name="Huang M."/>
            <person name="Idlebird D.G."/>
            <person name="Johnson R."/>
            <person name="Jolivet A."/>
            <person name="Jones S."/>
            <person name="Kagan R."/>
            <person name="King L.M."/>
            <person name="Leal B."/>
            <person name="Lebow H."/>
            <person name="Lee S."/>
            <person name="LeVan J.M."/>
            <person name="Lewis L.C."/>
            <person name="London P."/>
            <person name="Lorensuhewa L.M."/>
            <person name="Loulseged H."/>
            <person name="Lovett D.A."/>
            <person name="Lucier A."/>
            <person name="Lucier R.L."/>
            <person name="Ma J."/>
            <person name="Madu R.C."/>
            <person name="Mapua P."/>
            <person name="Martindale A.D."/>
            <person name="Martinez E."/>
            <person name="Massey E."/>
            <person name="Mawhiney S."/>
            <person name="Meador M.G."/>
            <person name="Mendez S."/>
            <person name="Mercado C."/>
            <person name="Mercado I.C."/>
            <person name="Merritt C.E."/>
            <person name="Miner Z.L."/>
            <person name="Minja E."/>
            <person name="Mitchell T."/>
            <person name="Mohabbat F."/>
            <person name="Mohabbat K."/>
            <person name="Montgomery B."/>
            <person name="Moore N."/>
            <person name="Morris S."/>
            <person name="Munidasa M."/>
            <person name="Ngo R.N."/>
            <person name="Nguyen N.B."/>
            <person name="Nickerson E."/>
            <person name="Nwaokelemeh O.O."/>
            <person name="Nwokenkwo S."/>
            <person name="Obregon M."/>
            <person name="Oguh M."/>
            <person name="Oragunye N."/>
            <person name="Oviedo R.J."/>
            <person name="Parish B.J."/>
            <person name="Parker D.N."/>
            <person name="Parrish J."/>
            <person name="Parks K.L."/>
            <person name="Paul H.A."/>
            <person name="Payton B.A."/>
            <person name="Perez A."/>
            <person name="Perrin W."/>
            <person name="Pickens A."/>
            <person name="Primus E.L."/>
            <person name="Pu L.-L."/>
            <person name="Puazo M."/>
            <person name="Quiles M.M."/>
            <person name="Quiroz J.B."/>
            <person name="Rabata D."/>
            <person name="Reeves K."/>
            <person name="Ruiz S.J."/>
            <person name="Shao H."/>
            <person name="Sisson I."/>
            <person name="Sonaike T."/>
            <person name="Sorelle R.P."/>
            <person name="Sutton A.E."/>
            <person name="Svatek A.F."/>
            <person name="Svetz L.A."/>
            <person name="Tamerisa K.S."/>
            <person name="Taylor T.R."/>
            <person name="Teague B."/>
            <person name="Thomas N."/>
            <person name="Thorn R.D."/>
            <person name="Trejos Z.Y."/>
            <person name="Trevino B.K."/>
            <person name="Ukegbu O.N."/>
            <person name="Urban J.B."/>
            <person name="Vasquez L.I."/>
            <person name="Vera V.A."/>
            <person name="Villasana D.M."/>
            <person name="Wang L."/>
            <person name="Ward-Moore S."/>
            <person name="Warren J.T."/>
            <person name="Wei X."/>
            <person name="White F."/>
            <person name="Williamson A.L."/>
            <person name="Wleczyk R."/>
            <person name="Wooden H.S."/>
            <person name="Wooden S.H."/>
            <person name="Yen J."/>
            <person name="Yoon L."/>
            <person name="Yoon V."/>
            <person name="Zorrilla S.E."/>
            <person name="Nelson D."/>
            <person name="Kucherlapati R."/>
            <person name="Weinstock G."/>
            <person name="Gibbs R.A."/>
        </authorList>
    </citation>
    <scope>NUCLEOTIDE SEQUENCE [LARGE SCALE GENOMIC DNA]</scope>
</reference>
<reference key="9">
    <citation type="submission" date="2005-07" db="EMBL/GenBank/DDBJ databases">
        <authorList>
            <person name="Mural R.J."/>
            <person name="Istrail S."/>
            <person name="Sutton G."/>
            <person name="Florea L."/>
            <person name="Halpern A.L."/>
            <person name="Mobarry C.M."/>
            <person name="Lippert R."/>
            <person name="Walenz B."/>
            <person name="Shatkay H."/>
            <person name="Dew I."/>
            <person name="Miller J.R."/>
            <person name="Flanigan M.J."/>
            <person name="Edwards N.J."/>
            <person name="Bolanos R."/>
            <person name="Fasulo D."/>
            <person name="Halldorsson B.V."/>
            <person name="Hannenhalli S."/>
            <person name="Turner R."/>
            <person name="Yooseph S."/>
            <person name="Lu F."/>
            <person name="Nusskern D.R."/>
            <person name="Shue B.C."/>
            <person name="Zheng X.H."/>
            <person name="Zhong F."/>
            <person name="Delcher A.L."/>
            <person name="Huson D.H."/>
            <person name="Kravitz S.A."/>
            <person name="Mouchard L."/>
            <person name="Reinert K."/>
            <person name="Remington K.A."/>
            <person name="Clark A.G."/>
            <person name="Waterman M.S."/>
            <person name="Eichler E.E."/>
            <person name="Adams M.D."/>
            <person name="Hunkapiller M.W."/>
            <person name="Myers E.W."/>
            <person name="Venter J.C."/>
        </authorList>
    </citation>
    <scope>NUCLEOTIDE SEQUENCE [LARGE SCALE GENOMIC DNA]</scope>
</reference>
<reference key="10">
    <citation type="journal article" date="2004" name="Genome Res.">
        <title>The status, quality, and expansion of the NIH full-length cDNA project: the Mammalian Gene Collection (MGC).</title>
        <authorList>
            <consortium name="The MGC Project Team"/>
        </authorList>
    </citation>
    <scope>NUCLEOTIDE SEQUENCE [LARGE SCALE MRNA] (ISOFORM 1)</scope>
    <source>
        <tissue>Brain</tissue>
        <tissue>Cervix</tissue>
    </source>
</reference>
<reference key="11">
    <citation type="submission" date="2004-04" db="EMBL/GenBank/DDBJ databases">
        <title>A new spermatogenesis-related gene.</title>
        <authorList>
            <person name="Yuan L.G."/>
            <person name="Tian Y.Q."/>
            <person name="Qiao Y."/>
            <person name="Miao S.Y."/>
            <person name="Wang L.F."/>
        </authorList>
    </citation>
    <scope>NUCLEOTIDE SEQUENCE [LARGE SCALE MRNA] OF 1-173 (ISOFORM 1)</scope>
    <source>
        <tissue>Testis</tissue>
    </source>
</reference>
<reference key="12">
    <citation type="submission" date="2008-12" db="UniProtKB">
        <authorList>
            <person name="Lubec G."/>
            <person name="Chen W.-Q."/>
            <person name="Sun Y."/>
        </authorList>
    </citation>
    <scope>PROTEIN SEQUENCE OF 101-142 AND 180-192</scope>
    <scope>IDENTIFICATION BY MASS SPECTROMETRY</scope>
    <source>
        <tissue>Fetal brain cortex</tissue>
    </source>
</reference>
<reference key="13">
    <citation type="submission" date="2009-03" db="UniProtKB">
        <authorList>
            <person name="Bienvenut W.V."/>
            <person name="Waridel P."/>
            <person name="Quadroni M."/>
        </authorList>
    </citation>
    <scope>PROTEIN SEQUENCE OF 101-142; 145-192 AND 201-215</scope>
    <scope>PHOSPHORYLATION AT SER-166</scope>
    <scope>IDENTIFICATION BY MASS SPECTROMETRY</scope>
    <source>
        <tissue>Cervix carcinoma</tissue>
    </source>
</reference>
<reference key="14">
    <citation type="journal article" date="1998" name="FASEB J.">
        <title>Isolation of cDNA clones coding for IgE autoantigens with serum IgE from atopic dermatitis patients.</title>
        <authorList>
            <person name="Natter S."/>
            <person name="Seiberler S."/>
            <person name="Hufnagl P."/>
            <person name="Binder B.R."/>
            <person name="Hirschl A.M."/>
            <person name="Ring J."/>
            <person name="Abeck D."/>
            <person name="Schmidt T."/>
            <person name="Valent P."/>
            <person name="Valenta R."/>
        </authorList>
    </citation>
    <scope>ALLERGEN</scope>
</reference>
<reference key="15">
    <citation type="journal article" date="1998" name="FEBS Lett.">
        <title>Unregulated exposure of the ribosomal M-site caused by NAC depletion results in delivery of non-secretory polypeptides to the Sec61 complex.</title>
        <authorList>
            <person name="Moeller I."/>
            <person name="Beatrix B."/>
            <person name="Kreibich G."/>
            <person name="Sakai H."/>
            <person name="Lauring B."/>
            <person name="Wiedmann M."/>
        </authorList>
    </citation>
    <scope>FUNCTION</scope>
</reference>
<reference key="16">
    <citation type="journal article" date="2000" name="J. Biol. Chem.">
        <title>The alpha and beta subunit of the nascent polypeptide-associated complex have distinct functions.</title>
        <authorList>
            <person name="Beatrix B."/>
            <person name="Sakai H."/>
            <person name="Wiedmann M."/>
        </authorList>
    </citation>
    <scope>FUNCTION</scope>
    <scope>INTERACTION WITH BTF3</scope>
    <scope>ASSOCIATION WITH RIBOSOMES</scope>
    <scope>SUBCELLULAR LOCATION</scope>
</reference>
<reference key="17">
    <citation type="journal article" date="2003" name="Biochem. Biophys. Res. Commun.">
        <title>The alpha-chain of the nascent polypeptide-associated complex binds to and regulates FADD function.</title>
        <authorList>
            <person name="Stilo R."/>
            <person name="Liguoro D."/>
            <person name="di Jeso B."/>
            <person name="Leonardi A."/>
            <person name="Vito P."/>
        </authorList>
    </citation>
    <scope>INTERACTION WITH FADD</scope>
</reference>
<reference key="18">
    <citation type="journal article" date="2003" name="Bone">
        <title>Activation of the JNK-AP-1 signal transduction pathway is associated with pathogenesis and progression of human osteosarcomas.</title>
        <authorList>
            <person name="Papachristou D.J."/>
            <person name="Batistatou A."/>
            <person name="Sykiotis G.P."/>
            <person name="Varakis I."/>
            <person name="Papavassiliou A.G."/>
        </authorList>
    </citation>
    <scope>SUBCELLULAR LOCATION</scope>
    <scope>POSSIBLE INVOLVEMENT IN OSTEOSARCOMA</scope>
</reference>
<reference key="19">
    <citation type="journal article" date="2004" name="J. Biol. Chem.">
        <title>Integrin-linked kinase regulates the nuclear entry of the c-Jun coactivator alpha-NAC and its coactivation potency.</title>
        <authorList>
            <person name="Quelo I."/>
            <person name="Gauthier C."/>
            <person name="Hannigan G.E."/>
            <person name="Dedhar S."/>
            <person name="St-Arnaud R."/>
        </authorList>
    </citation>
    <scope>PHOSPHORYLATION AT SER-43</scope>
    <scope>SUBCELLULAR LOCATION</scope>
</reference>
<reference key="20">
    <citation type="journal article" date="2005" name="J. Cell Sci.">
        <title>NACA is a positive regulator of human erythroid-cell differentiation.</title>
        <authorList>
            <person name="Lopez S."/>
            <person name="Stuhl L."/>
            <person name="Fichelson S."/>
            <person name="Dubart-Kupperschmitt A."/>
            <person name="St Arnaud R."/>
            <person name="Galindo J.-R."/>
            <person name="Murati A."/>
            <person name="Berda N."/>
            <person name="Dubreuil P."/>
            <person name="Gomez S."/>
        </authorList>
    </citation>
    <scope>FUNCTION</scope>
</reference>
<reference key="21">
    <citation type="journal article" date="2005" name="PLoS Biol.">
        <title>Emergence of young human genes after a burst of retroposition in primates.</title>
        <authorList>
            <person name="Marques A.C."/>
            <person name="Dupanloup I."/>
            <person name="Vinckenbosch N."/>
            <person name="Reymond A."/>
            <person name="Kaessmann H."/>
        </authorList>
    </citation>
    <scope>TISSUE SPECIFICITY</scope>
</reference>
<reference key="22">
    <citation type="journal article" date="2006" name="Cell">
        <title>Global, in vivo, and site-specific phosphorylation dynamics in signaling networks.</title>
        <authorList>
            <person name="Olsen J.V."/>
            <person name="Blagoev B."/>
            <person name="Gnad F."/>
            <person name="Macek B."/>
            <person name="Kumar C."/>
            <person name="Mortensen P."/>
            <person name="Mann M."/>
        </authorList>
    </citation>
    <scope>IDENTIFICATION BY MASS SPECTROMETRY [LARGE SCALE ANALYSIS]</scope>
    <source>
        <tissue>Cervix carcinoma</tissue>
    </source>
</reference>
<reference key="23">
    <citation type="journal article" date="2007" name="Science">
        <title>ATM and ATR substrate analysis reveals extensive protein networks responsive to DNA damage.</title>
        <authorList>
            <person name="Matsuoka S."/>
            <person name="Ballif B.A."/>
            <person name="Smogorzewska A."/>
            <person name="McDonald E.R. III"/>
            <person name="Hurov K.E."/>
            <person name="Luo J."/>
            <person name="Bakalarski C.E."/>
            <person name="Zhao Z."/>
            <person name="Solimini N."/>
            <person name="Lerenthal Y."/>
            <person name="Shiloh Y."/>
            <person name="Gygi S.P."/>
            <person name="Elledge S.J."/>
        </authorList>
    </citation>
    <scope>PHOSPHORYLATION [LARGE SCALE ANALYSIS] AT SER-186</scope>
    <scope>IDENTIFICATION BY MASS SPECTROMETRY [LARGE SCALE ANALYSIS]</scope>
    <source>
        <tissue>Embryonic kidney</tissue>
    </source>
</reference>
<reference key="24">
    <citation type="journal article" date="2008" name="Mol. Cell">
        <title>Kinase-selective enrichment enables quantitative phosphoproteomics of the kinome across the cell cycle.</title>
        <authorList>
            <person name="Daub H."/>
            <person name="Olsen J.V."/>
            <person name="Bairlein M."/>
            <person name="Gnad F."/>
            <person name="Oppermann F.S."/>
            <person name="Korner R."/>
            <person name="Greff Z."/>
            <person name="Keri G."/>
            <person name="Stemmann O."/>
            <person name="Mann M."/>
        </authorList>
    </citation>
    <scope>PHOSPHORYLATION [LARGE SCALE ANALYSIS] AT SER-166</scope>
    <scope>IDENTIFICATION BY MASS SPECTROMETRY [LARGE SCALE ANALYSIS]</scope>
    <source>
        <tissue>Cervix carcinoma</tissue>
    </source>
</reference>
<reference key="25">
    <citation type="journal article" date="2008" name="Proc. Natl. Acad. Sci. U.S.A.">
        <title>A quantitative atlas of mitotic phosphorylation.</title>
        <authorList>
            <person name="Dephoure N."/>
            <person name="Zhou C."/>
            <person name="Villen J."/>
            <person name="Beausoleil S.A."/>
            <person name="Bakalarski C.E."/>
            <person name="Elledge S.J."/>
            <person name="Gygi S.P."/>
        </authorList>
    </citation>
    <scope>PHOSPHORYLATION [LARGE SCALE ANALYSIS] AT THR-161; SER-166 AND SER-191</scope>
    <scope>IDENTIFICATION BY MASS SPECTROMETRY [LARGE SCALE ANALYSIS]</scope>
    <source>
        <tissue>Cervix carcinoma</tissue>
    </source>
</reference>
<reference key="26">
    <citation type="journal article" date="2009" name="Anal. Chem.">
        <title>Lys-N and trypsin cover complementary parts of the phosphoproteome in a refined SCX-based approach.</title>
        <authorList>
            <person name="Gauci S."/>
            <person name="Helbig A.O."/>
            <person name="Slijper M."/>
            <person name="Krijgsveld J."/>
            <person name="Heck A.J."/>
            <person name="Mohammed S."/>
        </authorList>
    </citation>
    <scope>IDENTIFICATION BY MASS SPECTROMETRY [LARGE SCALE ANALYSIS]</scope>
</reference>
<reference key="27">
    <citation type="journal article" date="2009" name="Sci. Signal.">
        <title>Quantitative phosphoproteomic analysis of T cell receptor signaling reveals system-wide modulation of protein-protein interactions.</title>
        <authorList>
            <person name="Mayya V."/>
            <person name="Lundgren D.H."/>
            <person name="Hwang S.-I."/>
            <person name="Rezaul K."/>
            <person name="Wu L."/>
            <person name="Eng J.K."/>
            <person name="Rodionov V."/>
            <person name="Han D.K."/>
        </authorList>
    </citation>
    <scope>PHOSPHORYLATION [LARGE SCALE ANALYSIS] AT SER-166</scope>
    <scope>IDENTIFICATION BY MASS SPECTROMETRY [LARGE SCALE ANALYSIS]</scope>
    <source>
        <tissue>Leukemic T-cell</tissue>
    </source>
</reference>
<reference key="28">
    <citation type="journal article" date="2009" name="Science">
        <title>Lysine acetylation targets protein complexes and co-regulates major cellular functions.</title>
        <authorList>
            <person name="Choudhary C."/>
            <person name="Kumar C."/>
            <person name="Gnad F."/>
            <person name="Nielsen M.L."/>
            <person name="Rehman M."/>
            <person name="Walther T.C."/>
            <person name="Olsen J.V."/>
            <person name="Mann M."/>
        </authorList>
    </citation>
    <scope>ACETYLATION [LARGE SCALE ANALYSIS] AT LYS-142</scope>
    <scope>IDENTIFICATION BY MASS SPECTROMETRY [LARGE SCALE ANALYSIS]</scope>
</reference>
<reference key="29">
    <citation type="journal article" date="2010" name="Sci. Signal.">
        <title>Quantitative phosphoproteomics reveals widespread full phosphorylation site occupancy during mitosis.</title>
        <authorList>
            <person name="Olsen J.V."/>
            <person name="Vermeulen M."/>
            <person name="Santamaria A."/>
            <person name="Kumar C."/>
            <person name="Miller M.L."/>
            <person name="Jensen L.J."/>
            <person name="Gnad F."/>
            <person name="Cox J."/>
            <person name="Jensen T.S."/>
            <person name="Nigg E.A."/>
            <person name="Brunak S."/>
            <person name="Mann M."/>
        </authorList>
    </citation>
    <scope>PHOSPHORYLATION [LARGE SCALE ANALYSIS] AT SER-186; SER-191 AND SER-203</scope>
    <scope>IDENTIFICATION BY MASS SPECTROMETRY [LARGE SCALE ANALYSIS]</scope>
    <source>
        <tissue>Cervix carcinoma</tissue>
    </source>
</reference>
<reference key="30">
    <citation type="journal article" date="2011" name="BMC Syst. Biol.">
        <title>Initial characterization of the human central proteome.</title>
        <authorList>
            <person name="Burkard T.R."/>
            <person name="Planyavsky M."/>
            <person name="Kaupe I."/>
            <person name="Breitwieser F.P."/>
            <person name="Buerckstuemmer T."/>
            <person name="Bennett K.L."/>
            <person name="Superti-Furga G."/>
            <person name="Colinge J."/>
        </authorList>
    </citation>
    <scope>IDENTIFICATION BY MASS SPECTROMETRY [LARGE SCALE ANALYSIS]</scope>
</reference>
<reference key="31">
    <citation type="journal article" date="2011" name="Sci. Signal.">
        <title>System-wide temporal characterization of the proteome and phosphoproteome of human embryonic stem cell differentiation.</title>
        <authorList>
            <person name="Rigbolt K.T."/>
            <person name="Prokhorova T.A."/>
            <person name="Akimov V."/>
            <person name="Henningsen J."/>
            <person name="Johansen P.T."/>
            <person name="Kratchmarova I."/>
            <person name="Kassem M."/>
            <person name="Mann M."/>
            <person name="Olsen J.V."/>
            <person name="Blagoev B."/>
        </authorList>
    </citation>
    <scope>PHOSPHORYLATION [LARGE SCALE ANALYSIS] AT SER-166</scope>
    <scope>IDENTIFICATION BY MASS SPECTROMETRY [LARGE SCALE ANALYSIS]</scope>
</reference>
<reference key="32">
    <citation type="journal article" date="2013" name="J. Proteome Res.">
        <title>Toward a comprehensive characterization of a human cancer cell phosphoproteome.</title>
        <authorList>
            <person name="Zhou H."/>
            <person name="Di Palma S."/>
            <person name="Preisinger C."/>
            <person name="Peng M."/>
            <person name="Polat A.N."/>
            <person name="Heck A.J."/>
            <person name="Mohammed S."/>
        </authorList>
    </citation>
    <scope>PHOSPHORYLATION [LARGE SCALE ANALYSIS] AT SER-132</scope>
    <scope>IDENTIFICATION BY MASS SPECTROMETRY [LARGE SCALE ANALYSIS]</scope>
    <source>
        <tissue>Erythroleukemia</tissue>
    </source>
</reference>
<reference key="33">
    <citation type="journal article" date="2014" name="J. Proteomics">
        <title>An enzyme assisted RP-RPLC approach for in-depth analysis of human liver phosphoproteome.</title>
        <authorList>
            <person name="Bian Y."/>
            <person name="Song C."/>
            <person name="Cheng K."/>
            <person name="Dong M."/>
            <person name="Wang F."/>
            <person name="Huang J."/>
            <person name="Sun D."/>
            <person name="Wang L."/>
            <person name="Ye M."/>
            <person name="Zou H."/>
        </authorList>
    </citation>
    <scope>IDENTIFICATION BY MASS SPECTROMETRY [LARGE SCALE ANALYSIS]</scope>
    <source>
        <tissue>Liver</tissue>
    </source>
</reference>
<reference key="34">
    <citation type="journal article" date="2015" name="Proteomics">
        <title>N-terminome analysis of the human mitochondrial proteome.</title>
        <authorList>
            <person name="Vaca Jacome A.S."/>
            <person name="Rabilloud T."/>
            <person name="Schaeffer-Reiss C."/>
            <person name="Rompais M."/>
            <person name="Ayoub D."/>
            <person name="Lane L."/>
            <person name="Bairoch A."/>
            <person name="Van Dorsselaer A."/>
            <person name="Carapito C."/>
        </authorList>
    </citation>
    <scope>IDENTIFICATION BY MASS SPECTROMETRY [LARGE SCALE ANALYSIS]</scope>
</reference>
<reference key="35">
    <citation type="journal article" date="2017" name="Nat. Struct. Mol. Biol.">
        <title>Site-specific mapping of the human SUMO proteome reveals co-modification with phosphorylation.</title>
        <authorList>
            <person name="Hendriks I.A."/>
            <person name="Lyon D."/>
            <person name="Young C."/>
            <person name="Jensen L.J."/>
            <person name="Vertegaal A.C."/>
            <person name="Nielsen M.L."/>
        </authorList>
    </citation>
    <scope>SUMOYLATION [LARGE SCALE ANALYSIS] AT LYS-142</scope>
    <scope>IDENTIFICATION BY MASS SPECTROMETRY [LARGE SCALE ANALYSIS]</scope>
</reference>
<reference key="36">
    <citation type="journal article" date="2010" name="Biochemistry">
        <title>The crystal structure of the human nascent polypeptide-associated complex domain reveals a nucleic acid-binding region on the NACA subunit.</title>
        <authorList>
            <person name="Liu Y."/>
            <person name="Hu Y."/>
            <person name="Li X."/>
            <person name="Niu L."/>
            <person name="Teng M."/>
        </authorList>
    </citation>
    <scope>X-RAY CRYSTALLOGRAPHY (2.5 ANGSTROMS) OF 84-136</scope>
    <scope>SUBUNIT</scope>
    <scope>DNA/RNA-BINDING REGION</scope>
    <scope>SUBCELLULAR LOCATION</scope>
</reference>
<reference key="37">
    <citation type="journal article" date="2010" name="Protein Cell">
        <title>Crystal structures of NAC domains of human nascent polypeptide-associated complex (NAC) and its alphaNAC subunit.</title>
        <authorList>
            <person name="Wang L."/>
            <person name="Zhang W."/>
            <person name="Wang L."/>
            <person name="Zhang X.C."/>
            <person name="Li X."/>
            <person name="Rao Z."/>
        </authorList>
    </citation>
    <scope>X-RAY CRYSTALLOGRAPHY (1.9 ANGSTROMS) OF 79-132</scope>
    <scope>SUBUNIT</scope>
</reference>
<proteinExistence type="evidence at protein level"/>
<evidence type="ECO:0000250" key="1"/>
<evidence type="ECO:0000250" key="2">
    <source>
        <dbReference type="UniProtKB" id="Q60817"/>
    </source>
</evidence>
<evidence type="ECO:0000255" key="3">
    <source>
        <dbReference type="PROSITE-ProRule" id="PRU00507"/>
    </source>
</evidence>
<evidence type="ECO:0000256" key="4">
    <source>
        <dbReference type="SAM" id="MobiDB-lite"/>
    </source>
</evidence>
<evidence type="ECO:0000269" key="5">
    <source>
    </source>
</evidence>
<evidence type="ECO:0000269" key="6">
    <source>
    </source>
</evidence>
<evidence type="ECO:0000269" key="7">
    <source>
    </source>
</evidence>
<evidence type="ECO:0000269" key="8">
    <source>
    </source>
</evidence>
<evidence type="ECO:0000269" key="9">
    <source>
    </source>
</evidence>
<evidence type="ECO:0000269" key="10">
    <source>
    </source>
</evidence>
<evidence type="ECO:0000269" key="11">
    <source>
    </source>
</evidence>
<evidence type="ECO:0000269" key="12">
    <source>
    </source>
</evidence>
<evidence type="ECO:0000269" key="13">
    <source>
    </source>
</evidence>
<evidence type="ECO:0000269" key="14">
    <source>
    </source>
</evidence>
<evidence type="ECO:0000269" key="15">
    <source ref="13"/>
</evidence>
<evidence type="ECO:0000305" key="16"/>
<evidence type="ECO:0007744" key="17">
    <source>
    </source>
</evidence>
<evidence type="ECO:0007744" key="18">
    <source>
    </source>
</evidence>
<evidence type="ECO:0007744" key="19">
    <source>
    </source>
</evidence>
<evidence type="ECO:0007744" key="20">
    <source>
    </source>
</evidence>
<evidence type="ECO:0007744" key="21">
    <source>
    </source>
</evidence>
<evidence type="ECO:0007744" key="22">
    <source>
    </source>
</evidence>
<evidence type="ECO:0007744" key="23">
    <source>
    </source>
</evidence>
<evidence type="ECO:0007744" key="24">
    <source>
    </source>
</evidence>
<evidence type="ECO:0007744" key="25">
    <source>
    </source>
</evidence>
<evidence type="ECO:0007829" key="26">
    <source>
        <dbReference type="PDB" id="3LKX"/>
    </source>
</evidence>
<evidence type="ECO:0007829" key="27">
    <source>
        <dbReference type="PDB" id="3MCB"/>
    </source>
</evidence>
<gene>
    <name type="primary">NACA</name>
    <name type="ORF">HSD48</name>
</gene>
<accession>Q13765</accession>
<accession>A8MTN7</accession>
<accession>B2R4P8</accession>
<accession>F8VU71</accession>
<accession>Q3KQV4</accession>
<accession>Q53A18</accession>
<accession>Q53G46</accession>
<sequence length="215" mass="23384">MPGEATETVPATEQELPQPQAETGSGTESDSDESVPELEEQDSTQATTQQAQLAAAAEIDEEPVSKAKQSRSEKKARKAMSKLGLRQVTGVTRVTIRKSKNILFVITKPDVYKSPASDTYIVFGEAKIEDLSQQAQLAAAEKFKVQGEAVSNIQENTQTPTVQEESEEEEVDETGVEVKDIELVMSQANVSRAKAVRALKNNSNDIVNAIMELTM</sequence>
<name>NACA_HUMAN</name>
<keyword id="KW-0002">3D-structure</keyword>
<keyword id="KW-0007">Acetylation</keyword>
<keyword id="KW-0020">Allergen</keyword>
<keyword id="KW-0025">Alternative splicing</keyword>
<keyword id="KW-0143">Chaperone</keyword>
<keyword id="KW-0963">Cytoplasm</keyword>
<keyword id="KW-0903">Direct protein sequencing</keyword>
<keyword id="KW-0238">DNA-binding</keyword>
<keyword id="KW-1017">Isopeptide bond</keyword>
<keyword id="KW-0539">Nucleus</keyword>
<keyword id="KW-0597">Phosphoprotein</keyword>
<keyword id="KW-0653">Protein transport</keyword>
<keyword id="KW-1267">Proteomics identification</keyword>
<keyword id="KW-1185">Reference proteome</keyword>
<keyword id="KW-0804">Transcription</keyword>
<keyword id="KW-0813">Transport</keyword>
<keyword id="KW-0832">Ubl conjugation</keyword>